<sequence length="352" mass="38312">MGAALALLGDLVATVSEAAAATGFSVAEIAAGEAAAAIEVQIASLATVEGITSTEAIAAIGLTPQTYAVITGAPGAIAGIAALVQTVSGVSSVAQVGYKFFSEWDHKISTVGLNQQPGMALELFNPEDYDILFPGVNTFVNNIQYLDPRHWGPTLFSAISQAFWHLVRDDLPRLTSQEIERRTQRFFRDSLAKFLEETTWTIVNAPINLYNSIQNYYSALSPIRPSMVRQVAEREGTQVTFGHSYSQSIDDADSIEEVTQRLDLRNKEANVHSGEFIEKTLAPGGANQRIAPQWMLPLLLGLYGTVTPALEAYEDAPSKKKRRMSRGSSQKAKGPRASSKTSYKRRRRSTRS</sequence>
<keyword id="KW-0024">Alternative initiation</keyword>
<keyword id="KW-0025">Alternative splicing</keyword>
<keyword id="KW-0167">Capsid protein</keyword>
<keyword id="KW-0238">DNA-binding</keyword>
<keyword id="KW-1038">Host endoplasmic reticulum</keyword>
<keyword id="KW-1043">Host membrane</keyword>
<keyword id="KW-1048">Host nucleus</keyword>
<keyword id="KW-0945">Host-virus interaction</keyword>
<keyword id="KW-0407">Ion channel</keyword>
<keyword id="KW-0406">Ion transport</keyword>
<keyword id="KW-0426">Late protein</keyword>
<keyword id="KW-0449">Lipoprotein</keyword>
<keyword id="KW-0472">Membrane</keyword>
<keyword id="KW-0519">Myristate</keyword>
<keyword id="KW-0812">Transmembrane</keyword>
<keyword id="KW-1133">Transmembrane helix</keyword>
<keyword id="KW-0813">Transport</keyword>
<keyword id="KW-1161">Viral attachment to host cell</keyword>
<keyword id="KW-1182">Viral ion channel</keyword>
<keyword id="KW-1162">Viral penetration into host cytoplasm</keyword>
<keyword id="KW-1163">Viral penetration into host nucleus</keyword>
<keyword id="KW-1173">Viral penetration via permeabilization of host membrane</keyword>
<keyword id="KW-1188">Viral release from host cell</keyword>
<keyword id="KW-0946">Virion</keyword>
<keyword id="KW-1160">Virus entry into host cell</keyword>
<proteinExistence type="inferred from homology"/>
<organism>
    <name type="scientific">Simian virus 12 (strain wt100)</name>
    <name type="common">SV-12</name>
    <name type="synonym">Baboon polyomavirus 1</name>
    <dbReference type="NCBI Taxonomy" id="557605"/>
    <lineage>
        <taxon>Viruses</taxon>
        <taxon>Monodnaviria</taxon>
        <taxon>Shotokuvirae</taxon>
        <taxon>Cossaviricota</taxon>
        <taxon>Papovaviricetes</taxon>
        <taxon>Sepolyvirales</taxon>
        <taxon>Polyomaviridae</taxon>
        <taxon>Simian virus 12</taxon>
    </lineage>
</organism>
<comment type="function">
    <molecule>Isoform VP2</molecule>
    <text evidence="1">Structural protein that resides within the core of the capsid surrounded by 72 VP1 pentamers. Participates in host cell receptor binding together with VP1. Following virus endocytosis and trafficking to the endoplasmic reticulum, VP2 and VP3 form oligomers and integrate into the endoplasmic reticulum membrane. Heterooligomer VP2-VP3 may create a viroporin for transporting the viral genome across the endoplasmic reticulum membrane to the cytoplasm. Nuclear entry of the viral DNA involves the selective exposure and importin recognition of VP2 or VP3 nuclear localization signal (shared C-terminus). Plays a role in virion assembly within the nucleus in particular through a DNA-binding domain located in the C-terminal region. A N-terminal myristoylation suggests a scaffold function for virion assembly (By similarity).</text>
</comment>
<comment type="function">
    <molecule>Isoform VP3</molecule>
    <text evidence="1">Structural protein that resides within the core of the capsid surrounded by 72 VP1 pentamers. Following virus endocytosis and trafficking to the endoplasmic reticulum, VP2 and VP3 form oligomers and integrate into the endoplasmic reticulum membrane. Heterooligomer VP2-VP3 may create a viroporin for transporting the viral genome across the endoplasmic reticulum membrane to the cytoplasm. Nuclear entry of the viral DNA involves the selective exposure and importin recognition of VP2 or VP3 nuclear localization signal (shared C-terminus). Plays a role in virion assembly within the nucleus. May participate in host cell lysis when associated with VP4 (By similarity).</text>
</comment>
<comment type="function">
    <molecule>Isoform VP4</molecule>
    <text evidence="1">Viroporin inducing perforation of cellular membranes to trigger virus progeny release. Forms pores of 3 nm inner diameter. VP4 is expressed about 24 hours after the late structural proteins and is not incorporated into the mature virion (By similarity).</text>
</comment>
<comment type="subunit">
    <molecule>Isoform VP2</molecule>
    <text evidence="1">Forms homooligomers, and heterooligomers with VP3 in the endoplasmic reticulum membrane. Interacts (via D1 domain) with VP1.</text>
</comment>
<comment type="subunit">
    <molecule>Isoform VP3</molecule>
    <text>Interacts (via D1 domain) with VP1.</text>
</comment>
<comment type="subcellular location">
    <molecule>Isoform VP2</molecule>
    <subcellularLocation>
        <location>Virion</location>
    </subcellularLocation>
    <subcellularLocation>
        <location>Host nucleus</location>
    </subcellularLocation>
    <subcellularLocation>
        <location>Host endoplasmic reticulum</location>
    </subcellularLocation>
    <subcellularLocation>
        <location evidence="1">Host endoplasmic reticulum membrane</location>
    </subcellularLocation>
</comment>
<comment type="subcellular location">
    <molecule>Isoform VP3</molecule>
    <subcellularLocation>
        <location>Virion</location>
    </subcellularLocation>
    <subcellularLocation>
        <location>Host nucleus</location>
    </subcellularLocation>
    <subcellularLocation>
        <location>Host endoplasmic reticulum</location>
    </subcellularLocation>
    <subcellularLocation>
        <location evidence="1">Host endoplasmic reticulum membrane</location>
    </subcellularLocation>
</comment>
<comment type="subcellular location">
    <molecule>Isoform VP4</molecule>
    <subcellularLocation>
        <location evidence="1">Host nucleus</location>
    </subcellularLocation>
</comment>
<comment type="alternative products">
    <event type="alternative splicing"/>
    <event type="alternative initiation"/>
    <isoform>
        <id>Q3L6L8-1</id>
        <name>VP2</name>
        <name>Minor capsid protein VP2</name>
        <sequence type="displayed"/>
    </isoform>
    <isoform>
        <id>Q3L6L8-2</id>
        <name>VP3</name>
        <name>Minor capsid protein VP3</name>
        <sequence type="described" ref="VSP_036020"/>
    </isoform>
    <isoform>
        <id>Q3L6L8-3</id>
        <name>VP4</name>
        <name>Viroporin VP4</name>
        <sequence type="described" ref="VSP_036019"/>
    </isoform>
    <isoform>
        <id>Q1W5X1-1</id>
        <name>VP1</name>
        <name>Major capsid protein VP1</name>
        <sequence type="external"/>
    </isoform>
    <isoform>
        <id>Q3L6L9-1</id>
        <name>Agno</name>
        <sequence type="external"/>
    </isoform>
</comment>
<comment type="miscellaneous">
    <molecule>Isoform VP2</molecule>
    <text>Produced by alternative splicing of the late mRNA.</text>
</comment>
<comment type="miscellaneous">
    <molecule>Isoform VP3</molecule>
    <text evidence="4">Produced by alternative initiation at Met-119 of isoform VP2.</text>
</comment>
<comment type="miscellaneous">
    <molecule>Isoform VP4</molecule>
    <text evidence="4">Produced by alternative initiation at Met-227 of isoform VP2.</text>
</comment>
<comment type="similarity">
    <text evidence="4">Belongs to the polyomaviruses capsid protein VP2 family.</text>
</comment>
<accession>Q3L6L8</accession>
<accession>Q1W5X3</accession>
<name>VP2_POVS1</name>
<protein>
    <recommendedName>
        <fullName>Minor capsid protein VP2</fullName>
    </recommendedName>
    <alternativeName>
        <fullName>Minor structural protein VP2</fullName>
    </alternativeName>
</protein>
<evidence type="ECO:0000250" key="1"/>
<evidence type="ECO:0000255" key="2"/>
<evidence type="ECO:0000256" key="3">
    <source>
        <dbReference type="SAM" id="MobiDB-lite"/>
    </source>
</evidence>
<evidence type="ECO:0000305" key="4"/>
<organismHost>
    <name type="scientific">Papio hamadryas ursinus</name>
    <name type="common">Chacma baboon</name>
    <dbReference type="NCBI Taxonomy" id="36229"/>
</organismHost>
<dbReference type="EMBL" id="AY614708">
    <property type="protein sequence ID" value="AAV75983.1"/>
    <property type="molecule type" value="Genomic_DNA"/>
</dbReference>
<dbReference type="EMBL" id="DQ435829">
    <property type="protein sequence ID" value="ABD92874.1"/>
    <property type="molecule type" value="Genomic_DNA"/>
</dbReference>
<dbReference type="RefSeq" id="YP_406552.1">
    <property type="nucleotide sequence ID" value="NC_007611.1"/>
</dbReference>
<dbReference type="GeneID" id="5123716"/>
<dbReference type="KEGG" id="vg:5123716"/>
<dbReference type="Proteomes" id="UP000130309">
    <property type="component" value="Segment"/>
</dbReference>
<dbReference type="Proteomes" id="UP000173202">
    <property type="component" value="Genome"/>
</dbReference>
<dbReference type="GO" id="GO:0043657">
    <property type="term" value="C:host cell"/>
    <property type="evidence" value="ECO:0007669"/>
    <property type="project" value="GOC"/>
</dbReference>
<dbReference type="GO" id="GO:0044167">
    <property type="term" value="C:host cell endoplasmic reticulum membrane"/>
    <property type="evidence" value="ECO:0007669"/>
    <property type="project" value="UniProtKB-SubCell"/>
</dbReference>
<dbReference type="GO" id="GO:0042025">
    <property type="term" value="C:host cell nucleus"/>
    <property type="evidence" value="ECO:0007669"/>
    <property type="project" value="UniProtKB-SubCell"/>
</dbReference>
<dbReference type="GO" id="GO:0016020">
    <property type="term" value="C:membrane"/>
    <property type="evidence" value="ECO:0007669"/>
    <property type="project" value="UniProtKB-KW"/>
</dbReference>
<dbReference type="GO" id="GO:0019028">
    <property type="term" value="C:viral capsid"/>
    <property type="evidence" value="ECO:0007669"/>
    <property type="project" value="UniProtKB-KW"/>
</dbReference>
<dbReference type="GO" id="GO:0015267">
    <property type="term" value="F:channel activity"/>
    <property type="evidence" value="ECO:0007669"/>
    <property type="project" value="UniProtKB-KW"/>
</dbReference>
<dbReference type="GO" id="GO:0003677">
    <property type="term" value="F:DNA binding"/>
    <property type="evidence" value="ECO:0007669"/>
    <property type="project" value="UniProtKB-KW"/>
</dbReference>
<dbReference type="GO" id="GO:0005198">
    <property type="term" value="F:structural molecule activity"/>
    <property type="evidence" value="ECO:0007669"/>
    <property type="project" value="InterPro"/>
</dbReference>
<dbReference type="GO" id="GO:0034220">
    <property type="term" value="P:monoatomic ion transmembrane transport"/>
    <property type="evidence" value="ECO:0007669"/>
    <property type="project" value="UniProtKB-KW"/>
</dbReference>
<dbReference type="GO" id="GO:0140267">
    <property type="term" value="P:symbiont entry into host cell via permeabilization of host membrane"/>
    <property type="evidence" value="ECO:0007669"/>
    <property type="project" value="UniProtKB-KW"/>
</dbReference>
<dbReference type="GO" id="GO:0075732">
    <property type="term" value="P:viral penetration into host nucleus"/>
    <property type="evidence" value="ECO:0007669"/>
    <property type="project" value="UniProtKB-KW"/>
</dbReference>
<dbReference type="GO" id="GO:0019062">
    <property type="term" value="P:virion attachment to host cell"/>
    <property type="evidence" value="ECO:0007669"/>
    <property type="project" value="UniProtKB-KW"/>
</dbReference>
<dbReference type="InterPro" id="IPR001070">
    <property type="entry name" value="Polyoma_coat_VP2"/>
</dbReference>
<dbReference type="Pfam" id="PF00761">
    <property type="entry name" value="Polyoma_coat2"/>
    <property type="match status" value="1"/>
</dbReference>
<dbReference type="PIRSF" id="PIRSF003377">
    <property type="entry name" value="Polyoma_coat2"/>
    <property type="match status" value="1"/>
</dbReference>
<feature type="initiator methionine" description="Removed; by host" evidence="1">
    <location>
        <position position="1"/>
    </location>
</feature>
<feature type="chain" id="PRO_0000356260" description="Minor capsid protein VP2">
    <location>
        <begin position="2"/>
        <end position="352"/>
    </location>
</feature>
<feature type="transmembrane region" description="Helical" evidence="2">
    <location>
        <begin position="290"/>
        <end position="310"/>
    </location>
</feature>
<feature type="region of interest" description="D1" evidence="1">
    <location>
        <begin position="273"/>
        <end position="308"/>
    </location>
</feature>
<feature type="region of interest" description="Disordered" evidence="3">
    <location>
        <begin position="312"/>
        <end position="352"/>
    </location>
</feature>
<feature type="region of interest" description="DNA-binding" evidence="1">
    <location>
        <begin position="313"/>
        <end position="352"/>
    </location>
</feature>
<feature type="short sequence motif" description="Nuclear localization signal" evidence="1">
    <location>
        <begin position="316"/>
        <end position="324"/>
    </location>
</feature>
<feature type="compositionally biased region" description="Basic residues" evidence="3">
    <location>
        <begin position="342"/>
        <end position="352"/>
    </location>
</feature>
<feature type="lipid moiety-binding region" description="N-myristoyl glycine; by host" evidence="1">
    <location>
        <position position="2"/>
    </location>
</feature>
<feature type="splice variant" id="VSP_036019" description="In isoform VP4." evidence="4">
    <location>
        <begin position="1"/>
        <end position="226"/>
    </location>
</feature>
<feature type="splice variant" id="VSP_036020" description="In isoform VP3." evidence="4">
    <location>
        <begin position="1"/>
        <end position="118"/>
    </location>
</feature>
<reference key="1">
    <citation type="journal article" date="2005" name="J. Virol.">
        <title>Complete nucleotide sequence of polyomavirus SA12.</title>
        <authorList>
            <person name="Cantalupo P."/>
            <person name="Doering A."/>
            <person name="Sullivan C.S."/>
            <person name="Pal A."/>
            <person name="Peden K.W."/>
            <person name="Lewis A.M."/>
            <person name="Pipas J.M."/>
        </authorList>
    </citation>
    <scope>NUCLEOTIDE SEQUENCE [LARGE SCALE GENOMIC DNA]</scope>
    <source>
        <strain>SA12</strain>
    </source>
</reference>
<reference key="2">
    <citation type="journal article" date="2006" name="J. Virol.">
        <title>Comparing phylogenetic codivergence between polyomaviruses and their hosts.</title>
        <authorList>
            <person name="Perez-Losada M."/>
            <person name="Christensen R.G."/>
            <person name="McClellan D.A."/>
            <person name="Adams B.J."/>
            <person name="Viscidi R.P."/>
            <person name="Demma J.C."/>
            <person name="Crandall K.A."/>
        </authorList>
    </citation>
    <scope>NUCLEOTIDE SEQUENCE [LARGE SCALE GENOMIC DNA]</scope>
    <source>
        <strain>SA12</strain>
    </source>
</reference>
<reference key="3">
    <citation type="journal article" date="2009" name="Virology">
        <title>The Polyomaviridae: Contributions of virus structure to our understanding of virus receptors and infectious entry.</title>
        <authorList>
            <person name="Neu U."/>
            <person name="Stehle T."/>
            <person name="Atwood W.J."/>
        </authorList>
    </citation>
    <scope>REVIEW</scope>
</reference>